<reference key="1">
    <citation type="journal article" date="2001" name="Nature">
        <title>Genome sequence of enterohaemorrhagic Escherichia coli O157:H7.</title>
        <authorList>
            <person name="Perna N.T."/>
            <person name="Plunkett G. III"/>
            <person name="Burland V."/>
            <person name="Mau B."/>
            <person name="Glasner J.D."/>
            <person name="Rose D.J."/>
            <person name="Mayhew G.F."/>
            <person name="Evans P.S."/>
            <person name="Gregor J."/>
            <person name="Kirkpatrick H.A."/>
            <person name="Posfai G."/>
            <person name="Hackett J."/>
            <person name="Klink S."/>
            <person name="Boutin A."/>
            <person name="Shao Y."/>
            <person name="Miller L."/>
            <person name="Grotbeck E.J."/>
            <person name="Davis N.W."/>
            <person name="Lim A."/>
            <person name="Dimalanta E.T."/>
            <person name="Potamousis K."/>
            <person name="Apodaca J."/>
            <person name="Anantharaman T.S."/>
            <person name="Lin J."/>
            <person name="Yen G."/>
            <person name="Schwartz D.C."/>
            <person name="Welch R.A."/>
            <person name="Blattner F.R."/>
        </authorList>
    </citation>
    <scope>NUCLEOTIDE SEQUENCE [LARGE SCALE GENOMIC DNA]</scope>
    <source>
        <strain>O157:H7 / EDL933 / ATCC 700927 / EHEC</strain>
    </source>
</reference>
<reference key="2">
    <citation type="journal article" date="2001" name="DNA Res.">
        <title>Complete genome sequence of enterohemorrhagic Escherichia coli O157:H7 and genomic comparison with a laboratory strain K-12.</title>
        <authorList>
            <person name="Hayashi T."/>
            <person name="Makino K."/>
            <person name="Ohnishi M."/>
            <person name="Kurokawa K."/>
            <person name="Ishii K."/>
            <person name="Yokoyama K."/>
            <person name="Han C.-G."/>
            <person name="Ohtsubo E."/>
            <person name="Nakayama K."/>
            <person name="Murata T."/>
            <person name="Tanaka M."/>
            <person name="Tobe T."/>
            <person name="Iida T."/>
            <person name="Takami H."/>
            <person name="Honda T."/>
            <person name="Sasakawa C."/>
            <person name="Ogasawara N."/>
            <person name="Yasunaga T."/>
            <person name="Kuhara S."/>
            <person name="Shiba T."/>
            <person name="Hattori M."/>
            <person name="Shinagawa H."/>
        </authorList>
    </citation>
    <scope>NUCLEOTIDE SEQUENCE [LARGE SCALE GENOMIC DNA]</scope>
    <source>
        <strain>O157:H7 / Sakai / RIMD 0509952 / EHEC</strain>
    </source>
</reference>
<feature type="initiator methionine" description="Removed" evidence="1">
    <location>
        <position position="1"/>
    </location>
</feature>
<feature type="chain" id="PRO_0000104284" description="Large ribosomal subunit protein uL11">
    <location>
        <begin position="2"/>
        <end position="142"/>
    </location>
</feature>
<feature type="modified residue" description="N,N,N-trimethylalanine" evidence="1">
    <location>
        <position position="2"/>
    </location>
</feature>
<feature type="modified residue" description="N6,N6,N6-trimethyllysine" evidence="1">
    <location>
        <position position="4"/>
    </location>
</feature>
<feature type="modified residue" description="N6,N6,N6-trimethyllysine" evidence="1">
    <location>
        <position position="40"/>
    </location>
</feature>
<keyword id="KW-0488">Methylation</keyword>
<keyword id="KW-1185">Reference proteome</keyword>
<keyword id="KW-0687">Ribonucleoprotein</keyword>
<keyword id="KW-0689">Ribosomal protein</keyword>
<keyword id="KW-0694">RNA-binding</keyword>
<keyword id="KW-0699">rRNA-binding</keyword>
<name>RL11_ECO57</name>
<evidence type="ECO:0000250" key="1"/>
<evidence type="ECO:0000255" key="2">
    <source>
        <dbReference type="HAMAP-Rule" id="MF_00736"/>
    </source>
</evidence>
<evidence type="ECO:0000305" key="3"/>
<proteinExistence type="inferred from homology"/>
<dbReference type="EMBL" id="AE005174">
    <property type="protein sequence ID" value="AAG59179.1"/>
    <property type="molecule type" value="Genomic_DNA"/>
</dbReference>
<dbReference type="EMBL" id="BA000007">
    <property type="protein sequence ID" value="BAB38329.1"/>
    <property type="molecule type" value="Genomic_DNA"/>
</dbReference>
<dbReference type="PIR" id="B91242">
    <property type="entry name" value="B91242"/>
</dbReference>
<dbReference type="PIR" id="G86089">
    <property type="entry name" value="G86089"/>
</dbReference>
<dbReference type="RefSeq" id="NP_312933.1">
    <property type="nucleotide sequence ID" value="NC_002695.1"/>
</dbReference>
<dbReference type="RefSeq" id="WP_001085926.1">
    <property type="nucleotide sequence ID" value="NZ_VOAI01000037.1"/>
</dbReference>
<dbReference type="SMR" id="P0A7J9"/>
<dbReference type="STRING" id="155864.Z5556"/>
<dbReference type="GeneID" id="914950"/>
<dbReference type="GeneID" id="93777911"/>
<dbReference type="KEGG" id="ece:Z5556"/>
<dbReference type="KEGG" id="ecs:ECs_4906"/>
<dbReference type="PATRIC" id="fig|386585.9.peg.5130"/>
<dbReference type="eggNOG" id="COG0080">
    <property type="taxonomic scope" value="Bacteria"/>
</dbReference>
<dbReference type="HOGENOM" id="CLU_074237_2_0_6"/>
<dbReference type="OMA" id="CKQFNAK"/>
<dbReference type="Proteomes" id="UP000000558">
    <property type="component" value="Chromosome"/>
</dbReference>
<dbReference type="Proteomes" id="UP000002519">
    <property type="component" value="Chromosome"/>
</dbReference>
<dbReference type="GO" id="GO:0022625">
    <property type="term" value="C:cytosolic large ribosomal subunit"/>
    <property type="evidence" value="ECO:0007669"/>
    <property type="project" value="TreeGrafter"/>
</dbReference>
<dbReference type="GO" id="GO:0070180">
    <property type="term" value="F:large ribosomal subunit rRNA binding"/>
    <property type="evidence" value="ECO:0007669"/>
    <property type="project" value="UniProtKB-UniRule"/>
</dbReference>
<dbReference type="GO" id="GO:0003735">
    <property type="term" value="F:structural constituent of ribosome"/>
    <property type="evidence" value="ECO:0007669"/>
    <property type="project" value="InterPro"/>
</dbReference>
<dbReference type="GO" id="GO:0006412">
    <property type="term" value="P:translation"/>
    <property type="evidence" value="ECO:0007669"/>
    <property type="project" value="UniProtKB-UniRule"/>
</dbReference>
<dbReference type="CDD" id="cd00349">
    <property type="entry name" value="Ribosomal_L11"/>
    <property type="match status" value="1"/>
</dbReference>
<dbReference type="FunFam" id="1.10.10.250:FF:000001">
    <property type="entry name" value="50S ribosomal protein L11"/>
    <property type="match status" value="1"/>
</dbReference>
<dbReference type="FunFam" id="3.30.1550.10:FF:000001">
    <property type="entry name" value="50S ribosomal protein L11"/>
    <property type="match status" value="1"/>
</dbReference>
<dbReference type="Gene3D" id="1.10.10.250">
    <property type="entry name" value="Ribosomal protein L11, C-terminal domain"/>
    <property type="match status" value="1"/>
</dbReference>
<dbReference type="Gene3D" id="3.30.1550.10">
    <property type="entry name" value="Ribosomal protein L11/L12, N-terminal domain"/>
    <property type="match status" value="1"/>
</dbReference>
<dbReference type="HAMAP" id="MF_00736">
    <property type="entry name" value="Ribosomal_uL11"/>
    <property type="match status" value="1"/>
</dbReference>
<dbReference type="InterPro" id="IPR000911">
    <property type="entry name" value="Ribosomal_uL11"/>
</dbReference>
<dbReference type="InterPro" id="IPR006519">
    <property type="entry name" value="Ribosomal_uL11_bac-typ"/>
</dbReference>
<dbReference type="InterPro" id="IPR020783">
    <property type="entry name" value="Ribosomal_uL11_C"/>
</dbReference>
<dbReference type="InterPro" id="IPR036769">
    <property type="entry name" value="Ribosomal_uL11_C_sf"/>
</dbReference>
<dbReference type="InterPro" id="IPR020785">
    <property type="entry name" value="Ribosomal_uL11_CS"/>
</dbReference>
<dbReference type="InterPro" id="IPR020784">
    <property type="entry name" value="Ribosomal_uL11_N"/>
</dbReference>
<dbReference type="InterPro" id="IPR036796">
    <property type="entry name" value="Ribosomal_uL11_N_sf"/>
</dbReference>
<dbReference type="NCBIfam" id="TIGR01632">
    <property type="entry name" value="L11_bact"/>
    <property type="match status" value="1"/>
</dbReference>
<dbReference type="PANTHER" id="PTHR11661">
    <property type="entry name" value="60S RIBOSOMAL PROTEIN L12"/>
    <property type="match status" value="1"/>
</dbReference>
<dbReference type="PANTHER" id="PTHR11661:SF1">
    <property type="entry name" value="LARGE RIBOSOMAL SUBUNIT PROTEIN UL11M"/>
    <property type="match status" value="1"/>
</dbReference>
<dbReference type="Pfam" id="PF00298">
    <property type="entry name" value="Ribosomal_L11"/>
    <property type="match status" value="1"/>
</dbReference>
<dbReference type="Pfam" id="PF03946">
    <property type="entry name" value="Ribosomal_L11_N"/>
    <property type="match status" value="1"/>
</dbReference>
<dbReference type="SMART" id="SM00649">
    <property type="entry name" value="RL11"/>
    <property type="match status" value="1"/>
</dbReference>
<dbReference type="SUPFAM" id="SSF54747">
    <property type="entry name" value="Ribosomal L11/L12e N-terminal domain"/>
    <property type="match status" value="1"/>
</dbReference>
<dbReference type="SUPFAM" id="SSF46906">
    <property type="entry name" value="Ribosomal protein L11, C-terminal domain"/>
    <property type="match status" value="1"/>
</dbReference>
<dbReference type="PROSITE" id="PS00359">
    <property type="entry name" value="RIBOSOMAL_L11"/>
    <property type="match status" value="1"/>
</dbReference>
<protein>
    <recommendedName>
        <fullName evidence="2">Large ribosomal subunit protein uL11</fullName>
    </recommendedName>
    <alternativeName>
        <fullName evidence="3">50S ribosomal protein L11</fullName>
    </alternativeName>
</protein>
<accession>P0A7J9</accession>
<accession>P02409</accession>
<accession>P76778</accession>
<organism>
    <name type="scientific">Escherichia coli O157:H7</name>
    <dbReference type="NCBI Taxonomy" id="83334"/>
    <lineage>
        <taxon>Bacteria</taxon>
        <taxon>Pseudomonadati</taxon>
        <taxon>Pseudomonadota</taxon>
        <taxon>Gammaproteobacteria</taxon>
        <taxon>Enterobacterales</taxon>
        <taxon>Enterobacteriaceae</taxon>
        <taxon>Escherichia</taxon>
    </lineage>
</organism>
<gene>
    <name evidence="2" type="primary">rplK</name>
    <name type="ordered locus">Z5556</name>
    <name type="ordered locus">ECs4906</name>
</gene>
<comment type="function">
    <text evidence="2">Forms part of the ribosomal stalk which helps the ribosome interact with GTP-bound translation factors.</text>
</comment>
<comment type="subunit">
    <text evidence="2">Part of the ribosomal stalk of the 50S ribosomal subunit. Interacts with L10 and the large rRNA to form the base of the stalk. L10 forms an elongated spine to which L12 dimers bind in a sequential fashion forming a multimeric L10(L12)X complex.</text>
</comment>
<comment type="PTM">
    <text evidence="2">One or more lysine residues are methylated.</text>
</comment>
<comment type="similarity">
    <text evidence="2">Belongs to the universal ribosomal protein uL11 family.</text>
</comment>
<sequence length="142" mass="14875">MAKKVQAYVKLQVAAGMANPSPPVGPALGQQGVNIMEFCKAFNAKTDSIEKGLPIPVVITVYADRSFTFVTKTPPAAVLLKKAAGIKSGSGKPNKDKVGKISRAQLQEIAQTKAADMTGADIEAMTRSIEGTARSMGLVVED</sequence>